<protein>
    <recommendedName>
        <fullName evidence="1">Membrane-bound lytic murein transglycosylase F</fullName>
        <ecNumber evidence="1">4.2.2.n1</ecNumber>
    </recommendedName>
    <alternativeName>
        <fullName evidence="1">Murein lyase F</fullName>
    </alternativeName>
</protein>
<keyword id="KW-0998">Cell outer membrane</keyword>
<keyword id="KW-0961">Cell wall biogenesis/degradation</keyword>
<keyword id="KW-0456">Lyase</keyword>
<keyword id="KW-0472">Membrane</keyword>
<keyword id="KW-1185">Reference proteome</keyword>
<keyword id="KW-0732">Signal</keyword>
<proteinExistence type="inferred from homology"/>
<evidence type="ECO:0000255" key="1">
    <source>
        <dbReference type="HAMAP-Rule" id="MF_02016"/>
    </source>
</evidence>
<accession>B3PLH7</accession>
<reference key="1">
    <citation type="journal article" date="2008" name="J. Bacteriol.">
        <title>Insights into plant cell wall degradation from the genome sequence of the soil bacterium Cellvibrio japonicus.</title>
        <authorList>
            <person name="DeBoy R.T."/>
            <person name="Mongodin E.F."/>
            <person name="Fouts D.E."/>
            <person name="Tailford L.E."/>
            <person name="Khouri H."/>
            <person name="Emerson J.B."/>
            <person name="Mohamoud Y."/>
            <person name="Watkins K."/>
            <person name="Henrissat B."/>
            <person name="Gilbert H.J."/>
            <person name="Nelson K.E."/>
        </authorList>
    </citation>
    <scope>NUCLEOTIDE SEQUENCE [LARGE SCALE GENOMIC DNA]</scope>
    <source>
        <strain>Ueda107</strain>
    </source>
</reference>
<name>MLTF_CELJU</name>
<gene>
    <name evidence="1" type="primary">mltF</name>
    <name type="ordered locus">CJA_2597</name>
</gene>
<sequence>MEIRKLSLSTIRSIITSLSVLVLVISASATLVRSTPPNVLEQVLASGELRVISTNGATTFYEGSDGLTGFEYSLLKGFADSLGVNLAIENQADTRELLHAVEQRQYHMGSAELTALESQDYHLSFAKPYMQITQQLVYNHRLGTPTSIKDLKGKEVLILADSAHSKRVARLQKKFPNLTWRPIENGQMIDLLEMVHKGEADYAVIDSNAYELHRYSYPRAKLAFDISNPQPLAWAFPHSKDTSLFDAAQRYMAQIKRDGSLAQVTKHFFERHIDEVTTGEAMVFAYRLQNRFPQWSDAMKSAATEFDLDWQMLAAIGYQESHWLADAESHTGVRGLMMLTKRTARAMGVNNREDPLQSIYGGAKYFRMMLDRLPERIQGDDRLNLALAAYNQGAGHLEDARVLTQRMGGNPDKWEDVRKYMPLLSKSQYYSRAKHGYMRGWEPVQFVDNVRNYHKIIAWHEQQNELRLASYSGGALSSLHKAPTETAAQGENLSL</sequence>
<dbReference type="EC" id="4.2.2.n1" evidence="1"/>
<dbReference type="EMBL" id="CP000934">
    <property type="protein sequence ID" value="ACE85968.1"/>
    <property type="molecule type" value="Genomic_DNA"/>
</dbReference>
<dbReference type="RefSeq" id="WP_012488193.1">
    <property type="nucleotide sequence ID" value="NC_010995.1"/>
</dbReference>
<dbReference type="SMR" id="B3PLH7"/>
<dbReference type="STRING" id="498211.CJA_2597"/>
<dbReference type="CAZy" id="GH23">
    <property type="family name" value="Glycoside Hydrolase Family 23"/>
</dbReference>
<dbReference type="KEGG" id="cja:CJA_2597"/>
<dbReference type="eggNOG" id="COG4623">
    <property type="taxonomic scope" value="Bacteria"/>
</dbReference>
<dbReference type="HOGENOM" id="CLU_027494_0_1_6"/>
<dbReference type="OrthoDB" id="9815002at2"/>
<dbReference type="Proteomes" id="UP000001036">
    <property type="component" value="Chromosome"/>
</dbReference>
<dbReference type="GO" id="GO:0009279">
    <property type="term" value="C:cell outer membrane"/>
    <property type="evidence" value="ECO:0007669"/>
    <property type="project" value="UniProtKB-SubCell"/>
</dbReference>
<dbReference type="GO" id="GO:0008933">
    <property type="term" value="F:peptidoglycan lytic transglycosylase activity"/>
    <property type="evidence" value="ECO:0007669"/>
    <property type="project" value="UniProtKB-UniRule"/>
</dbReference>
<dbReference type="GO" id="GO:0016998">
    <property type="term" value="P:cell wall macromolecule catabolic process"/>
    <property type="evidence" value="ECO:0007669"/>
    <property type="project" value="UniProtKB-UniRule"/>
</dbReference>
<dbReference type="GO" id="GO:0071555">
    <property type="term" value="P:cell wall organization"/>
    <property type="evidence" value="ECO:0007669"/>
    <property type="project" value="UniProtKB-KW"/>
</dbReference>
<dbReference type="GO" id="GO:0009253">
    <property type="term" value="P:peptidoglycan catabolic process"/>
    <property type="evidence" value="ECO:0007669"/>
    <property type="project" value="TreeGrafter"/>
</dbReference>
<dbReference type="CDD" id="cd13403">
    <property type="entry name" value="MLTF-like"/>
    <property type="match status" value="1"/>
</dbReference>
<dbReference type="CDD" id="cd01009">
    <property type="entry name" value="PBP2_YfhD_N"/>
    <property type="match status" value="1"/>
</dbReference>
<dbReference type="Gene3D" id="1.10.530.10">
    <property type="match status" value="1"/>
</dbReference>
<dbReference type="Gene3D" id="3.40.190.10">
    <property type="entry name" value="Periplasmic binding protein-like II"/>
    <property type="match status" value="2"/>
</dbReference>
<dbReference type="HAMAP" id="MF_02016">
    <property type="entry name" value="MltF"/>
    <property type="match status" value="1"/>
</dbReference>
<dbReference type="InterPro" id="IPR023346">
    <property type="entry name" value="Lysozyme-like_dom_sf"/>
</dbReference>
<dbReference type="InterPro" id="IPR023703">
    <property type="entry name" value="MltF"/>
</dbReference>
<dbReference type="InterPro" id="IPR001638">
    <property type="entry name" value="Solute-binding_3/MltF_N"/>
</dbReference>
<dbReference type="InterPro" id="IPR000189">
    <property type="entry name" value="Transglyc_AS"/>
</dbReference>
<dbReference type="InterPro" id="IPR008258">
    <property type="entry name" value="Transglycosylase_SLT_dom_1"/>
</dbReference>
<dbReference type="NCBIfam" id="NF008112">
    <property type="entry name" value="PRK10859.1"/>
    <property type="match status" value="1"/>
</dbReference>
<dbReference type="PANTHER" id="PTHR35936">
    <property type="entry name" value="MEMBRANE-BOUND LYTIC MUREIN TRANSGLYCOSYLASE F"/>
    <property type="match status" value="1"/>
</dbReference>
<dbReference type="PANTHER" id="PTHR35936:SF32">
    <property type="entry name" value="MEMBRANE-BOUND LYTIC MUREIN TRANSGLYCOSYLASE F"/>
    <property type="match status" value="1"/>
</dbReference>
<dbReference type="Pfam" id="PF00497">
    <property type="entry name" value="SBP_bac_3"/>
    <property type="match status" value="1"/>
</dbReference>
<dbReference type="Pfam" id="PF01464">
    <property type="entry name" value="SLT"/>
    <property type="match status" value="1"/>
</dbReference>
<dbReference type="SMART" id="SM00062">
    <property type="entry name" value="PBPb"/>
    <property type="match status" value="1"/>
</dbReference>
<dbReference type="SUPFAM" id="SSF53955">
    <property type="entry name" value="Lysozyme-like"/>
    <property type="match status" value="1"/>
</dbReference>
<dbReference type="SUPFAM" id="SSF53850">
    <property type="entry name" value="Periplasmic binding protein-like II"/>
    <property type="match status" value="1"/>
</dbReference>
<dbReference type="PROSITE" id="PS00922">
    <property type="entry name" value="TRANSGLYCOSYLASE"/>
    <property type="match status" value="1"/>
</dbReference>
<comment type="function">
    <text evidence="1">Murein-degrading enzyme that degrades murein glycan strands and insoluble, high-molecular weight murein sacculi, with the concomitant formation of a 1,6-anhydromuramoyl product. Lytic transglycosylases (LTs) play an integral role in the metabolism of the peptidoglycan (PG) sacculus. Their lytic action creates space within the PG sacculus to allow for its expansion as well as for the insertion of various structures such as secretion systems and flagella.</text>
</comment>
<comment type="catalytic activity">
    <reaction evidence="1">
        <text>Exolytic cleavage of the (1-&gt;4)-beta-glycosidic linkage between N-acetylmuramic acid (MurNAc) and N-acetylglucosamine (GlcNAc) residues in peptidoglycan, from either the reducing or the non-reducing ends of the peptidoglycan chains, with concomitant formation of a 1,6-anhydrobond in the MurNAc residue.</text>
        <dbReference type="EC" id="4.2.2.n1"/>
    </reaction>
</comment>
<comment type="subcellular location">
    <subcellularLocation>
        <location>Cell outer membrane</location>
        <topology>Peripheral membrane protein</topology>
    </subcellularLocation>
    <text evidence="1">Attached to the inner leaflet of the outer membrane.</text>
</comment>
<comment type="domain">
    <text evidence="1">The N-terminal domain does not have lytic activity and probably modulates enzymatic activity. The C-terminal domain is the catalytic active domain.</text>
</comment>
<comment type="similarity">
    <text evidence="1">In the N-terminal section; belongs to the bacterial solute-binding protein 3 family.</text>
</comment>
<comment type="similarity">
    <text evidence="1">In the C-terminal section; belongs to the transglycosylase Slt family.</text>
</comment>
<feature type="signal peptide" evidence="1">
    <location>
        <begin position="1"/>
        <end position="29"/>
    </location>
</feature>
<feature type="chain" id="PRO_0000353921" description="Membrane-bound lytic murein transglycosylase F">
    <location>
        <begin position="30"/>
        <end position="495"/>
    </location>
</feature>
<feature type="region of interest" description="Non-LT domain" evidence="1">
    <location>
        <begin position="30"/>
        <end position="273"/>
    </location>
</feature>
<feature type="region of interest" description="LT domain" evidence="1">
    <location>
        <begin position="274"/>
        <end position="495"/>
    </location>
</feature>
<feature type="active site" evidence="1">
    <location>
        <position position="320"/>
    </location>
</feature>
<organism>
    <name type="scientific">Cellvibrio japonicus (strain Ueda107)</name>
    <name type="common">Pseudomonas fluorescens subsp. cellulosa</name>
    <dbReference type="NCBI Taxonomy" id="498211"/>
    <lineage>
        <taxon>Bacteria</taxon>
        <taxon>Pseudomonadati</taxon>
        <taxon>Pseudomonadota</taxon>
        <taxon>Gammaproteobacteria</taxon>
        <taxon>Cellvibrionales</taxon>
        <taxon>Cellvibrionaceae</taxon>
        <taxon>Cellvibrio</taxon>
    </lineage>
</organism>